<keyword id="KW-0732">Signal</keyword>
<sequence>MNKKAIVGIFMSILMAGLVGCAGSSDAQAGDDLKPVIYLYPQEDNTEISVSLDYNGNLVDLIPEFNADKTWNVTANKDGKITFEGQTYDYLFWEGD</sequence>
<feature type="signal peptide" evidence="1">
    <location>
        <begin position="1"/>
        <end position="28"/>
    </location>
</feature>
<feature type="chain" id="PRO_0000022702" description="Uncharacterized protein in bglA 3'region">
    <location>
        <begin position="29"/>
        <end position="96" status="greater than"/>
    </location>
</feature>
<feature type="non-terminal residue">
    <location>
        <position position="96"/>
    </location>
</feature>
<organism>
    <name type="scientific">Butyrivibrio fibrisolvens</name>
    <dbReference type="NCBI Taxonomy" id="831"/>
    <lineage>
        <taxon>Bacteria</taxon>
        <taxon>Bacillati</taxon>
        <taxon>Bacillota</taxon>
        <taxon>Clostridia</taxon>
        <taxon>Lachnospirales</taxon>
        <taxon>Lachnospiraceae</taxon>
        <taxon>Butyrivibrio</taxon>
    </lineage>
</organism>
<dbReference type="EMBL" id="M31120">
    <property type="protein sequence ID" value="AAA23009.1"/>
    <property type="molecule type" value="Genomic_DNA"/>
</dbReference>
<dbReference type="PIR" id="B44768">
    <property type="entry name" value="B44768"/>
</dbReference>
<dbReference type="PROSITE" id="PS51257">
    <property type="entry name" value="PROKAR_LIPOPROTEIN"/>
    <property type="match status" value="1"/>
</dbReference>
<reference key="1">
    <citation type="journal article" date="1990" name="J. Gen. Microbiol.">
        <title>Cloning, sequencing and analysis of expression of a Butyrivibrio fibrisolvens gene encoding a beta-glucosidase.</title>
        <authorList>
            <person name="Lin L.L."/>
            <person name="Rumbak E."/>
            <person name="Zappe H."/>
            <person name="Thompson J.A."/>
            <person name="Woods D.R."/>
        </authorList>
    </citation>
    <scope>NUCLEOTIDE SEQUENCE [GENOMIC DNA]</scope>
    <source>
        <strain>H17C</strain>
    </source>
</reference>
<proteinExistence type="inferred from homology"/>
<accession>P16085</accession>
<name>YBGL_BUTFI</name>
<evidence type="ECO:0000255" key="1">
    <source>
        <dbReference type="PROSITE-ProRule" id="PRU00303"/>
    </source>
</evidence>
<protein>
    <recommendedName>
        <fullName>Uncharacterized protein in bglA 3'region</fullName>
    </recommendedName>
</protein>